<reference key="1">
    <citation type="journal article" date="1998" name="Genomics">
        <title>Cloning and characterization of the multiple murine homologues of NAIP (neuronal apoptosis inhibitory protein).</title>
        <authorList>
            <person name="Yaraghi Z."/>
            <person name="Korneluk R.G."/>
            <person name="MacKenzie A.E."/>
        </authorList>
    </citation>
    <scope>NUCLEOTIDE SEQUENCE [MRNA]</scope>
</reference>
<reference key="2">
    <citation type="journal article" date="1999" name="Mamm. Genome">
        <title>The mouse Naip gene cluster on chromosome 13 encodes several distinct functional transcripts.</title>
        <authorList>
            <person name="Huang S."/>
            <person name="Scharf J.M."/>
            <person name="Growney J.D."/>
            <person name="Endrizzi M.G."/>
            <person name="Dietrich W.F."/>
        </authorList>
    </citation>
    <scope>NUCLEOTIDE SEQUENCE [MRNA]</scope>
</reference>
<reference key="3">
    <citation type="journal article" date="2000" name="Genome Res.">
        <title>Genomic sequence analysis of the mouse Naip gene array.</title>
        <authorList>
            <person name="Endrizzi M.G."/>
            <person name="Hadinoto V."/>
            <person name="Growney J.D."/>
            <person name="Miller W."/>
            <person name="Dietrich W.F."/>
        </authorList>
    </citation>
    <scope>NUCLEOTIDE SEQUENCE [GENOMIC DNA]</scope>
</reference>
<reference key="4">
    <citation type="journal article" date="2004" name="Genome Res.">
        <title>The status, quality, and expansion of the NIH full-length cDNA project: the Mammalian Gene Collection (MGC).</title>
        <authorList>
            <consortium name="The MGC Project Team"/>
        </authorList>
    </citation>
    <scope>NUCLEOTIDE SEQUENCE [LARGE SCALE MRNA]</scope>
    <source>
        <tissue>Brain</tissue>
    </source>
</reference>
<comment type="function">
    <text evidence="1">Anti-apoptotic protein which acts by inhibiting the activities of CASP3, CASP7 and CASP9. Can inhibit the autocleavage of pro-CASP9 and cleavage of pro-CASP3 by CASP9. Capable of inhibiting CASP9 autoproteolysis at 'Asp-315' and decreasing the rate of auto proteolysis at 'Asp-330'. Acts as a mediator of neuronal survival in pathological conditions. Prevents motor-neuron apoptosis induced by a variety of signals (By similarity).</text>
</comment>
<comment type="subunit">
    <text evidence="1">Interacts (via NACHT domain) with APAF1 (via CARD and NACHT domains).</text>
</comment>
<comment type="domain">
    <text evidence="1">Both the BIR and NACHT domains are essential for effective inhibition of pro-CASP9 cleavage. BIR3 domain binds to procaspase-9 and the NACHT domain interacts with the NACHT domain of APAF1 forming a bridge between pro-CASP9 and APAF1 (By similarity).</text>
</comment>
<sequence length="1403" mass="158724">MAEHGESSEDRISEIDYEFLPELSALLGVDAVQLAKSQEEEEHKERMKMKKGFNSQMRSEAKRLKTFETYDTFRSWTPQEMAAAGFYHTGVKLGVQCFCCSLILFGNSLRKLPIERHKKLRPECEFLQGKDVGNIGKYDIRVKSPEKMLRGGKARYHEEEARLESFEDWPFYAHGTSPRVLSAAGFVFTGKRDTVQCFSCGGSLGNWEEGDDPWKEHAKWFPKCEFLQSKKSSEEIAQYIQGYEGFVHVTGEHFVNSWVRRELPMVSAYCNDSVFANEELRMDTFKDWPHESPVAVDALVRAGLFYTGKKGIVQCFSCGGCMEKCTEGDDPIQEHNKFFPNCVFLQTPKSSAEVIPALQSHCALPEAMETTSESNHDDPAAVHSTVVGLGRSEAQWFQEARSLSEQLRDNYTKATFRHMNLPEVCSSLGTDHLIGCDVSIISKHISQPVQGALTIPEVFSNLSSVMCVEGETGSGKTTFLKRIAFLWASGCCPLLYRFQLVFYLSLSSITPDQGLANIICAQLLGAGGCISEVCLSSIIQQLQHQVLFLLDDYSGLASLPQALHTLITKNYLSRTCLLIAVHTNRVRGIRSYLDTSLEIKEFPLSNTVYILKKFFSHNIKRLLEFMVYFGQNEDLQGIHKTPLFVAAVCTDWFENPSDQPFQDMALFKSYMQYLSLKHKGAAKPLQATVSSCGQLALTGLFSSCFEFNSDDLAEAGVDEDEELTTCLMSKFTAQRLRPVYRFLGPLFQEFLAAMRLTELLSSDRQEDQDLGLYYLRQINSPLKALTTYNNFLKYVFSHPSSKAGPTVVSHLLHLVDETELLENTYKNEDYVNHPPGTSRIMKGLKELWLLSPEYYSSFVSEHLLRIALNFAYESNTVAECSPFILQFLRGRTLALKVLNLQYFRDHPESLLLVKSLEVSINGNKVPKVVDYSVMEKSFETLQPPTIDQDYASAFEQMKEHEKNLSENEETIKSIKNIFPLQPPKISSGYWKLSPKPCKIPRLEVGVTNMGPADQALLQVLMEVFSASQSIEFRLSDSSGFLESIRPALELSKASVTKCSMSRLELSRAEQELLLTLPALQSLEVSETNQLPDQLFHNLHKFLGLKELCVRLDGKPDVLSVLPGEFPNLLHMEKLSIRTSMESDLSKLVKLIQNSPNLHVFHLKCDFLSNCDSLMAVLASCKKLREIEFSGRCFEAMPFVNILPNFISLKILNLISQQFPDKETSEKFAQALGSLRNLEELLVPTGDGIHQVAKLIVRQCLQLPCLRVLAFHYILDNDSVIEIARVATSGGFQKLEKLDLSMNHKITEEGYRNFFQALDNLPNLQNLNICRHIPECIQVQATTVKALGQCVSRLPSLTRLHMLSWLLDEEDMKVINDVKERHPQSKRLIIFWKWIVPFSPVVLE</sequence>
<proteinExistence type="evidence at transcript level"/>
<protein>
    <recommendedName>
        <fullName>Baculoviral IAP repeat-containing protein 1a</fullName>
    </recommendedName>
    <alternativeName>
        <fullName>Neuronal apoptosis inhibitory protein 1</fullName>
    </alternativeName>
</protein>
<evidence type="ECO:0000250" key="1"/>
<evidence type="ECO:0000255" key="2">
    <source>
        <dbReference type="PROSITE-ProRule" id="PRU00029"/>
    </source>
</evidence>
<evidence type="ECO:0000255" key="3">
    <source>
        <dbReference type="PROSITE-ProRule" id="PRU00136"/>
    </source>
</evidence>
<evidence type="ECO:0000305" key="4"/>
<keyword id="KW-0053">Apoptosis</keyword>
<keyword id="KW-0067">ATP-binding</keyword>
<keyword id="KW-0479">Metal-binding</keyword>
<keyword id="KW-0547">Nucleotide-binding</keyword>
<keyword id="KW-0646">Protease inhibitor</keyword>
<keyword id="KW-1185">Reference proteome</keyword>
<keyword id="KW-0677">Repeat</keyword>
<keyword id="KW-0789">Thiol protease inhibitor</keyword>
<keyword id="KW-0862">Zinc</keyword>
<feature type="chain" id="PRO_0000122342" description="Baculoviral IAP repeat-containing protein 1a">
    <location>
        <begin position="1"/>
        <end position="1403"/>
    </location>
</feature>
<feature type="repeat" description="BIR 1">
    <location>
        <begin position="63"/>
        <end position="128"/>
    </location>
</feature>
<feature type="repeat" description="BIR 2">
    <location>
        <begin position="162"/>
        <end position="228"/>
    </location>
</feature>
<feature type="repeat" description="BIR 3">
    <location>
        <begin position="281"/>
        <end position="346"/>
    </location>
</feature>
<feature type="domain" description="NACHT" evidence="3">
    <location>
        <begin position="464"/>
        <end position="758"/>
    </location>
</feature>
<feature type="binding site" evidence="2">
    <location>
        <position position="315"/>
    </location>
    <ligand>
        <name>Zn(2+)</name>
        <dbReference type="ChEBI" id="CHEBI:29105"/>
    </ligand>
</feature>
<feature type="binding site" evidence="2">
    <location>
        <position position="318"/>
    </location>
    <ligand>
        <name>Zn(2+)</name>
        <dbReference type="ChEBI" id="CHEBI:29105"/>
    </ligand>
</feature>
<feature type="binding site" evidence="2">
    <location>
        <position position="335"/>
    </location>
    <ligand>
        <name>Zn(2+)</name>
        <dbReference type="ChEBI" id="CHEBI:29105"/>
    </ligand>
</feature>
<feature type="binding site" evidence="2">
    <location>
        <position position="342"/>
    </location>
    <ligand>
        <name>Zn(2+)</name>
        <dbReference type="ChEBI" id="CHEBI:29105"/>
    </ligand>
</feature>
<feature type="binding site" evidence="1">
    <location>
        <position position="476"/>
    </location>
    <ligand>
        <name>ATP</name>
        <dbReference type="ChEBI" id="CHEBI:30616"/>
    </ligand>
</feature>
<feature type="sequence conflict" description="In Ref. 1; AAB69223 and 3; AAF82752." evidence="4" ref="1 3">
    <original>V</original>
    <variation>I</variation>
    <location>
        <position position="343"/>
    </location>
</feature>
<feature type="sequence conflict" description="In Ref. 1; AAB69223 and 3; AAF82752." evidence="4" ref="1 3">
    <original>Q</original>
    <variation>L</variation>
    <location>
        <position position="359"/>
    </location>
</feature>
<feature type="sequence conflict" description="In Ref. 2; AAD56763." evidence="4" ref="2">
    <original>E</original>
    <variation>K</variation>
    <location>
        <position position="624"/>
    </location>
</feature>
<feature type="sequence conflict" description="In Ref. 3; AAF82752." evidence="4" ref="3">
    <original>D</original>
    <variation>E</variation>
    <location>
        <position position="1092"/>
    </location>
</feature>
<feature type="sequence conflict" description="In Ref. 3; AAF82752." evidence="4" ref="3">
    <original>D</original>
    <variation>N</variation>
    <location>
        <position position="1116"/>
    </location>
</feature>
<feature type="sequence conflict" description="In Ref. 3; AAF82752." evidence="4" ref="3">
    <original>G</original>
    <variation>R</variation>
    <location>
        <position position="1123"/>
    </location>
</feature>
<feature type="sequence conflict" description="In Ref. 1; AAB69223." evidence="4" ref="1">
    <original>L</original>
    <variation>H</variation>
    <location>
        <position position="1129"/>
    </location>
</feature>
<feature type="sequence conflict" description="In Ref. 1; AAB69223 and 3; AAF82752." evidence="4" ref="1 3">
    <original>M</original>
    <variation>T</variation>
    <location>
        <position position="1140"/>
    </location>
</feature>
<feature type="sequence conflict" description="In Ref. 3; AAF82752." evidence="4" ref="3">
    <original>A</original>
    <variation>V</variation>
    <location>
        <position position="1269"/>
    </location>
</feature>
<gene>
    <name type="primary">Naip1</name>
    <name type="synonym">Birc1a</name>
    <name type="synonym">Naip</name>
</gene>
<name>BIR1A_MOUSE</name>
<dbReference type="EMBL" id="AF007769">
    <property type="protein sequence ID" value="AAB69223.1"/>
    <property type="molecule type" value="mRNA"/>
</dbReference>
<dbReference type="EMBL" id="AF135491">
    <property type="protein sequence ID" value="AAD56763.1"/>
    <property type="molecule type" value="mRNA"/>
</dbReference>
<dbReference type="EMBL" id="AF242432">
    <property type="protein sequence ID" value="AAF82752.1"/>
    <property type="molecule type" value="Genomic_DNA"/>
</dbReference>
<dbReference type="EMBL" id="BC132413">
    <property type="protein sequence ID" value="AAI32414.1"/>
    <property type="molecule type" value="mRNA"/>
</dbReference>
<dbReference type="CCDS" id="CCDS26729.1"/>
<dbReference type="RefSeq" id="NP_032696.2">
    <property type="nucleotide sequence ID" value="NM_008670.2"/>
</dbReference>
<dbReference type="SMR" id="Q9QWK5"/>
<dbReference type="BioGRID" id="201684">
    <property type="interactions" value="1"/>
</dbReference>
<dbReference type="CORUM" id="Q9QWK5"/>
<dbReference type="FunCoup" id="Q9QWK5">
    <property type="interactions" value="17"/>
</dbReference>
<dbReference type="STRING" id="10090.ENSMUSP00000022142"/>
<dbReference type="MEROPS" id="I32.001"/>
<dbReference type="GlyGen" id="Q9QWK5">
    <property type="glycosylation" value="1 site"/>
</dbReference>
<dbReference type="iPTMnet" id="Q9QWK5"/>
<dbReference type="PhosphoSitePlus" id="Q9QWK5"/>
<dbReference type="jPOST" id="Q9QWK5"/>
<dbReference type="PaxDb" id="10090-ENSMUSP00000022142"/>
<dbReference type="PeptideAtlas" id="Q9QWK5"/>
<dbReference type="ProteomicsDB" id="273783"/>
<dbReference type="DNASU" id="17940"/>
<dbReference type="Ensembl" id="ENSMUST00000022142.7">
    <property type="protein sequence ID" value="ENSMUSP00000022142.6"/>
    <property type="gene ID" value="ENSMUSG00000021640.7"/>
</dbReference>
<dbReference type="Ensembl" id="ENSMUST00000222155.2">
    <property type="protein sequence ID" value="ENSMUSP00000152583.2"/>
    <property type="gene ID" value="ENSMUSG00000021640.7"/>
</dbReference>
<dbReference type="GeneID" id="17940"/>
<dbReference type="KEGG" id="mmu:17940"/>
<dbReference type="UCSC" id="uc007rqr.1">
    <property type="organism name" value="mouse"/>
</dbReference>
<dbReference type="AGR" id="MGI:1298223"/>
<dbReference type="CTD" id="17940"/>
<dbReference type="MGI" id="MGI:1298223">
    <property type="gene designation" value="Naip1"/>
</dbReference>
<dbReference type="VEuPathDB" id="HostDB:ENSMUSG00000021640"/>
<dbReference type="eggNOG" id="KOG1101">
    <property type="taxonomic scope" value="Eukaryota"/>
</dbReference>
<dbReference type="GeneTree" id="ENSGT00940000163369"/>
<dbReference type="HOGENOM" id="CLU_005648_0_0_1"/>
<dbReference type="InParanoid" id="Q9QWK5"/>
<dbReference type="OrthoDB" id="4034597at2759"/>
<dbReference type="PhylomeDB" id="Q9QWK5"/>
<dbReference type="TreeFam" id="TF105356"/>
<dbReference type="BioGRID-ORCS" id="17940">
    <property type="hits" value="0 hits in 76 CRISPR screens"/>
</dbReference>
<dbReference type="ChiTaRS" id="Naip1">
    <property type="organism name" value="mouse"/>
</dbReference>
<dbReference type="PRO" id="PR:Q9QWK5"/>
<dbReference type="Proteomes" id="UP000000589">
    <property type="component" value="Chromosome 13"/>
</dbReference>
<dbReference type="RNAct" id="Q9QWK5">
    <property type="molecule type" value="protein"/>
</dbReference>
<dbReference type="Bgee" id="ENSMUSG00000021640">
    <property type="expression patterns" value="Expressed in left colon and 67 other cell types or tissues"/>
</dbReference>
<dbReference type="ExpressionAtlas" id="Q9QWK5">
    <property type="expression patterns" value="baseline and differential"/>
</dbReference>
<dbReference type="GO" id="GO:0016323">
    <property type="term" value="C:basolateral plasma membrane"/>
    <property type="evidence" value="ECO:0000314"/>
    <property type="project" value="UniProtKB"/>
</dbReference>
<dbReference type="GO" id="GO:0005737">
    <property type="term" value="C:cytoplasm"/>
    <property type="evidence" value="ECO:0000314"/>
    <property type="project" value="UniProtKB"/>
</dbReference>
<dbReference type="GO" id="GO:0005524">
    <property type="term" value="F:ATP binding"/>
    <property type="evidence" value="ECO:0000250"/>
    <property type="project" value="UniProtKB"/>
</dbReference>
<dbReference type="GO" id="GO:0004869">
    <property type="term" value="F:cysteine-type endopeptidase inhibitor activity"/>
    <property type="evidence" value="ECO:0000315"/>
    <property type="project" value="UniProtKB"/>
</dbReference>
<dbReference type="GO" id="GO:0043027">
    <property type="term" value="F:cysteine-type endopeptidase inhibitor activity involved in apoptotic process"/>
    <property type="evidence" value="ECO:0007669"/>
    <property type="project" value="InterPro"/>
</dbReference>
<dbReference type="GO" id="GO:0046872">
    <property type="term" value="F:metal ion binding"/>
    <property type="evidence" value="ECO:0007669"/>
    <property type="project" value="UniProtKB-KW"/>
</dbReference>
<dbReference type="GO" id="GO:0006915">
    <property type="term" value="P:apoptotic process"/>
    <property type="evidence" value="ECO:0000315"/>
    <property type="project" value="MGI"/>
</dbReference>
<dbReference type="GO" id="GO:0071391">
    <property type="term" value="P:cellular response to estrogen stimulus"/>
    <property type="evidence" value="ECO:0000315"/>
    <property type="project" value="MGI"/>
</dbReference>
<dbReference type="GO" id="GO:1904019">
    <property type="term" value="P:epithelial cell apoptotic process"/>
    <property type="evidence" value="ECO:0000315"/>
    <property type="project" value="MGI"/>
</dbReference>
<dbReference type="GO" id="GO:0043066">
    <property type="term" value="P:negative regulation of apoptotic process"/>
    <property type="evidence" value="ECO:0000315"/>
    <property type="project" value="UniProtKB"/>
</dbReference>
<dbReference type="GO" id="GO:1904036">
    <property type="term" value="P:negative regulation of epithelial cell apoptotic process"/>
    <property type="evidence" value="ECO:0000315"/>
    <property type="project" value="MGI"/>
</dbReference>
<dbReference type="CDD" id="cd00022">
    <property type="entry name" value="BIR"/>
    <property type="match status" value="3"/>
</dbReference>
<dbReference type="FunFam" id="1.10.1170.10:FF:000007">
    <property type="entry name" value="Baculoviral IAP repeat-containing protein 1"/>
    <property type="match status" value="2"/>
</dbReference>
<dbReference type="FunFam" id="1.10.1170.10:FF:000013">
    <property type="entry name" value="Baculoviral IAP repeat-containing protein 1"/>
    <property type="match status" value="1"/>
</dbReference>
<dbReference type="FunFam" id="3.40.50.300:FF:001126">
    <property type="entry name" value="Baculoviral IAP repeat-containing protein 1"/>
    <property type="match status" value="1"/>
</dbReference>
<dbReference type="FunFam" id="3.80.10.10:FF:000316">
    <property type="entry name" value="Baculoviral IAP repeat-containing protein 1"/>
    <property type="match status" value="1"/>
</dbReference>
<dbReference type="Gene3D" id="1.10.1170.10">
    <property type="entry name" value="Inhibitor Of Apoptosis Protein (2mihbC-IAP-1), Chain A"/>
    <property type="match status" value="3"/>
</dbReference>
<dbReference type="Gene3D" id="3.40.50.300">
    <property type="entry name" value="P-loop containing nucleotide triphosphate hydrolases"/>
    <property type="match status" value="1"/>
</dbReference>
<dbReference type="Gene3D" id="3.80.10.10">
    <property type="entry name" value="Ribonuclease Inhibitor"/>
    <property type="match status" value="1"/>
</dbReference>
<dbReference type="InterPro" id="IPR001370">
    <property type="entry name" value="BIR_rpt"/>
</dbReference>
<dbReference type="InterPro" id="IPR032675">
    <property type="entry name" value="LRR_dom_sf"/>
</dbReference>
<dbReference type="InterPro" id="IPR007111">
    <property type="entry name" value="NACHT_NTPase"/>
</dbReference>
<dbReference type="InterPro" id="IPR028789">
    <property type="entry name" value="Naip"/>
</dbReference>
<dbReference type="InterPro" id="IPR053882">
    <property type="entry name" value="Nlrc4-like_WHD"/>
</dbReference>
<dbReference type="InterPro" id="IPR040535">
    <property type="entry name" value="NLRC4_HD"/>
</dbReference>
<dbReference type="InterPro" id="IPR027417">
    <property type="entry name" value="P-loop_NTPase"/>
</dbReference>
<dbReference type="PANTHER" id="PTHR46914">
    <property type="entry name" value="BACULOVIRAL IAP REPEAT-CONTAINING PROTEIN 1"/>
    <property type="match status" value="1"/>
</dbReference>
<dbReference type="PANTHER" id="PTHR46914:SF1">
    <property type="entry name" value="BACULOVIRAL IAP REPEAT-CONTAINING PROTEIN 1"/>
    <property type="match status" value="1"/>
</dbReference>
<dbReference type="Pfam" id="PF00653">
    <property type="entry name" value="BIR"/>
    <property type="match status" value="3"/>
</dbReference>
<dbReference type="Pfam" id="PF05729">
    <property type="entry name" value="NACHT"/>
    <property type="match status" value="1"/>
</dbReference>
<dbReference type="Pfam" id="PF22524">
    <property type="entry name" value="Nlrc4-like_WHD"/>
    <property type="match status" value="1"/>
</dbReference>
<dbReference type="Pfam" id="PF17889">
    <property type="entry name" value="NLRC4_HD"/>
    <property type="match status" value="1"/>
</dbReference>
<dbReference type="SMART" id="SM00238">
    <property type="entry name" value="BIR"/>
    <property type="match status" value="3"/>
</dbReference>
<dbReference type="SUPFAM" id="SSF57924">
    <property type="entry name" value="Inhibitor of apoptosis (IAP) repeat"/>
    <property type="match status" value="3"/>
</dbReference>
<dbReference type="SUPFAM" id="SSF52540">
    <property type="entry name" value="P-loop containing nucleoside triphosphate hydrolases"/>
    <property type="match status" value="1"/>
</dbReference>
<dbReference type="SUPFAM" id="SSF52047">
    <property type="entry name" value="RNI-like"/>
    <property type="match status" value="1"/>
</dbReference>
<dbReference type="PROSITE" id="PS01282">
    <property type="entry name" value="BIR_REPEAT_1"/>
    <property type="match status" value="1"/>
</dbReference>
<dbReference type="PROSITE" id="PS50143">
    <property type="entry name" value="BIR_REPEAT_2"/>
    <property type="match status" value="3"/>
</dbReference>
<dbReference type="PROSITE" id="PS50837">
    <property type="entry name" value="NACHT"/>
    <property type="match status" value="1"/>
</dbReference>
<organism>
    <name type="scientific">Mus musculus</name>
    <name type="common">Mouse</name>
    <dbReference type="NCBI Taxonomy" id="10090"/>
    <lineage>
        <taxon>Eukaryota</taxon>
        <taxon>Metazoa</taxon>
        <taxon>Chordata</taxon>
        <taxon>Craniata</taxon>
        <taxon>Vertebrata</taxon>
        <taxon>Euteleostomi</taxon>
        <taxon>Mammalia</taxon>
        <taxon>Eutheria</taxon>
        <taxon>Euarchontoglires</taxon>
        <taxon>Glires</taxon>
        <taxon>Rodentia</taxon>
        <taxon>Myomorpha</taxon>
        <taxon>Muroidea</taxon>
        <taxon>Muridae</taxon>
        <taxon>Murinae</taxon>
        <taxon>Mus</taxon>
        <taxon>Mus</taxon>
    </lineage>
</organism>
<accession>Q9QWK5</accession>
<accession>A2RT89</accession>
<accession>Q9JIB5</accession>
<accession>Q9R017</accession>